<evidence type="ECO:0000255" key="1">
    <source>
        <dbReference type="HAMAP-Rule" id="MF_01033"/>
    </source>
</evidence>
<keyword id="KW-0028">Amino-acid biosynthesis</keyword>
<keyword id="KW-0100">Branched-chain amino acid biosynthesis</keyword>
<keyword id="KW-0963">Cytoplasm</keyword>
<keyword id="KW-0432">Leucine biosynthesis</keyword>
<keyword id="KW-0460">Magnesium</keyword>
<keyword id="KW-0464">Manganese</keyword>
<keyword id="KW-0479">Metal-binding</keyword>
<keyword id="KW-0520">NAD</keyword>
<keyword id="KW-0560">Oxidoreductase</keyword>
<keyword id="KW-1185">Reference proteome</keyword>
<proteinExistence type="inferred from homology"/>
<name>LEU3_RHIME</name>
<gene>
    <name evidence="1" type="primary">leuB</name>
    <name type="ordered locus">R03310</name>
    <name type="ORF">SMc04405</name>
</gene>
<reference key="1">
    <citation type="journal article" date="2001" name="Proc. Natl. Acad. Sci. U.S.A.">
        <title>Analysis of the chromosome sequence of the legume symbiont Sinorhizobium meliloti strain 1021.</title>
        <authorList>
            <person name="Capela D."/>
            <person name="Barloy-Hubler F."/>
            <person name="Gouzy J."/>
            <person name="Bothe G."/>
            <person name="Ampe F."/>
            <person name="Batut J."/>
            <person name="Boistard P."/>
            <person name="Becker A."/>
            <person name="Boutry M."/>
            <person name="Cadieu E."/>
            <person name="Dreano S."/>
            <person name="Gloux S."/>
            <person name="Godrie T."/>
            <person name="Goffeau A."/>
            <person name="Kahn D."/>
            <person name="Kiss E."/>
            <person name="Lelaure V."/>
            <person name="Masuy D."/>
            <person name="Pohl T."/>
            <person name="Portetelle D."/>
            <person name="Puehler A."/>
            <person name="Purnelle B."/>
            <person name="Ramsperger U."/>
            <person name="Renard C."/>
            <person name="Thebault P."/>
            <person name="Vandenbol M."/>
            <person name="Weidner S."/>
            <person name="Galibert F."/>
        </authorList>
    </citation>
    <scope>NUCLEOTIDE SEQUENCE [LARGE SCALE GENOMIC DNA]</scope>
    <source>
        <strain>1021</strain>
    </source>
</reference>
<reference key="2">
    <citation type="journal article" date="2001" name="Science">
        <title>The composite genome of the legume symbiont Sinorhizobium meliloti.</title>
        <authorList>
            <person name="Galibert F."/>
            <person name="Finan T.M."/>
            <person name="Long S.R."/>
            <person name="Puehler A."/>
            <person name="Abola P."/>
            <person name="Ampe F."/>
            <person name="Barloy-Hubler F."/>
            <person name="Barnett M.J."/>
            <person name="Becker A."/>
            <person name="Boistard P."/>
            <person name="Bothe G."/>
            <person name="Boutry M."/>
            <person name="Bowser L."/>
            <person name="Buhrmester J."/>
            <person name="Cadieu E."/>
            <person name="Capela D."/>
            <person name="Chain P."/>
            <person name="Cowie A."/>
            <person name="Davis R.W."/>
            <person name="Dreano S."/>
            <person name="Federspiel N.A."/>
            <person name="Fisher R.F."/>
            <person name="Gloux S."/>
            <person name="Godrie T."/>
            <person name="Goffeau A."/>
            <person name="Golding B."/>
            <person name="Gouzy J."/>
            <person name="Gurjal M."/>
            <person name="Hernandez-Lucas I."/>
            <person name="Hong A."/>
            <person name="Huizar L."/>
            <person name="Hyman R.W."/>
            <person name="Jones T."/>
            <person name="Kahn D."/>
            <person name="Kahn M.L."/>
            <person name="Kalman S."/>
            <person name="Keating D.H."/>
            <person name="Kiss E."/>
            <person name="Komp C."/>
            <person name="Lelaure V."/>
            <person name="Masuy D."/>
            <person name="Palm C."/>
            <person name="Peck M.C."/>
            <person name="Pohl T.M."/>
            <person name="Portetelle D."/>
            <person name="Purnelle B."/>
            <person name="Ramsperger U."/>
            <person name="Surzycki R."/>
            <person name="Thebault P."/>
            <person name="Vandenbol M."/>
            <person name="Vorhoelter F.J."/>
            <person name="Weidner S."/>
            <person name="Wells D.H."/>
            <person name="Wong K."/>
            <person name="Yeh K.-C."/>
            <person name="Batut J."/>
        </authorList>
    </citation>
    <scope>NUCLEOTIDE SEQUENCE [LARGE SCALE GENOMIC DNA]</scope>
    <source>
        <strain>1021</strain>
    </source>
</reference>
<dbReference type="EC" id="1.1.1.85" evidence="1"/>
<dbReference type="EMBL" id="AL591688">
    <property type="protein sequence ID" value="CAC47889.1"/>
    <property type="molecule type" value="Genomic_DNA"/>
</dbReference>
<dbReference type="RefSeq" id="NP_387416.1">
    <property type="nucleotide sequence ID" value="NC_003047.1"/>
</dbReference>
<dbReference type="RefSeq" id="WP_003535893.1">
    <property type="nucleotide sequence ID" value="NC_003047.1"/>
</dbReference>
<dbReference type="SMR" id="Q92KY8"/>
<dbReference type="EnsemblBacteria" id="CAC47889">
    <property type="protein sequence ID" value="CAC47889"/>
    <property type="gene ID" value="SMc04405"/>
</dbReference>
<dbReference type="KEGG" id="sme:SMc04405"/>
<dbReference type="PATRIC" id="fig|266834.11.peg.4870"/>
<dbReference type="eggNOG" id="COG0473">
    <property type="taxonomic scope" value="Bacteria"/>
</dbReference>
<dbReference type="HOGENOM" id="CLU_031953_0_3_5"/>
<dbReference type="OrthoDB" id="9767905at2"/>
<dbReference type="UniPathway" id="UPA00048">
    <property type="reaction ID" value="UER00072"/>
</dbReference>
<dbReference type="Proteomes" id="UP000001976">
    <property type="component" value="Chromosome"/>
</dbReference>
<dbReference type="GO" id="GO:0005829">
    <property type="term" value="C:cytosol"/>
    <property type="evidence" value="ECO:0007669"/>
    <property type="project" value="TreeGrafter"/>
</dbReference>
<dbReference type="GO" id="GO:0003862">
    <property type="term" value="F:3-isopropylmalate dehydrogenase activity"/>
    <property type="evidence" value="ECO:0007669"/>
    <property type="project" value="UniProtKB-UniRule"/>
</dbReference>
<dbReference type="GO" id="GO:0000287">
    <property type="term" value="F:magnesium ion binding"/>
    <property type="evidence" value="ECO:0007669"/>
    <property type="project" value="InterPro"/>
</dbReference>
<dbReference type="GO" id="GO:0051287">
    <property type="term" value="F:NAD binding"/>
    <property type="evidence" value="ECO:0007669"/>
    <property type="project" value="InterPro"/>
</dbReference>
<dbReference type="GO" id="GO:0009098">
    <property type="term" value="P:L-leucine biosynthetic process"/>
    <property type="evidence" value="ECO:0007669"/>
    <property type="project" value="UniProtKB-UniRule"/>
</dbReference>
<dbReference type="FunFam" id="3.40.718.10:FF:000006">
    <property type="entry name" value="3-isopropylmalate dehydrogenase"/>
    <property type="match status" value="1"/>
</dbReference>
<dbReference type="Gene3D" id="3.40.718.10">
    <property type="entry name" value="Isopropylmalate Dehydrogenase"/>
    <property type="match status" value="1"/>
</dbReference>
<dbReference type="HAMAP" id="MF_01033">
    <property type="entry name" value="LeuB_type1"/>
    <property type="match status" value="1"/>
</dbReference>
<dbReference type="InterPro" id="IPR019818">
    <property type="entry name" value="IsoCit/isopropylmalate_DH_CS"/>
</dbReference>
<dbReference type="InterPro" id="IPR024084">
    <property type="entry name" value="IsoPropMal-DH-like_dom"/>
</dbReference>
<dbReference type="InterPro" id="IPR004429">
    <property type="entry name" value="Isopropylmalate_DH"/>
</dbReference>
<dbReference type="NCBIfam" id="TIGR00169">
    <property type="entry name" value="leuB"/>
    <property type="match status" value="1"/>
</dbReference>
<dbReference type="PANTHER" id="PTHR42979">
    <property type="entry name" value="3-ISOPROPYLMALATE DEHYDROGENASE"/>
    <property type="match status" value="1"/>
</dbReference>
<dbReference type="PANTHER" id="PTHR42979:SF1">
    <property type="entry name" value="3-ISOPROPYLMALATE DEHYDROGENASE"/>
    <property type="match status" value="1"/>
</dbReference>
<dbReference type="Pfam" id="PF00180">
    <property type="entry name" value="Iso_dh"/>
    <property type="match status" value="1"/>
</dbReference>
<dbReference type="SMART" id="SM01329">
    <property type="entry name" value="Iso_dh"/>
    <property type="match status" value="1"/>
</dbReference>
<dbReference type="SUPFAM" id="SSF53659">
    <property type="entry name" value="Isocitrate/Isopropylmalate dehydrogenase-like"/>
    <property type="match status" value="1"/>
</dbReference>
<dbReference type="PROSITE" id="PS00470">
    <property type="entry name" value="IDH_IMDH"/>
    <property type="match status" value="1"/>
</dbReference>
<organism>
    <name type="scientific">Rhizobium meliloti (strain 1021)</name>
    <name type="common">Ensifer meliloti</name>
    <name type="synonym">Sinorhizobium meliloti</name>
    <dbReference type="NCBI Taxonomy" id="266834"/>
    <lineage>
        <taxon>Bacteria</taxon>
        <taxon>Pseudomonadati</taxon>
        <taxon>Pseudomonadota</taxon>
        <taxon>Alphaproteobacteria</taxon>
        <taxon>Hyphomicrobiales</taxon>
        <taxon>Rhizobiaceae</taxon>
        <taxon>Sinorhizobium/Ensifer group</taxon>
        <taxon>Sinorhizobium</taxon>
    </lineage>
</organism>
<sequence>MTVRNLFLLPGDGIGPEAMAEVRKIIAYMNAERDAGFVTDEGLVGGSAYDAHGAAISEGDMAKALAADAVLFGAVGGPKWDAVPYEVRPEAGLLRLRKDLELFANLRPAICYPALANASSLKPELVEGLDILIVRELTGGVYFGEPKEIVDLGNGQKRGIDTQVYDTYEIERIAGVAFELARTRNNRVCSMEKRNVMKSGVLWNQVVTETHKAKYSDVQLEHMLADAGGMQLVRQPKQFDVIVTDNLFGDMLSDVAAMLTGSLGMLPSASLGAPDAKTGKRKALYEPVHGSAPDIAGTGVANPIAMIASFAMCLRYSFNLVKEADDLEKAIANVLDQGIRTGDIMAEGCRKVGTAEMGDAILAEFKSLSA</sequence>
<accession>Q92KY8</accession>
<comment type="function">
    <text evidence="1">Catalyzes the oxidation of 3-carboxy-2-hydroxy-4-methylpentanoate (3-isopropylmalate) to 3-carboxy-4-methyl-2-oxopentanoate. The product decarboxylates to 4-methyl-2 oxopentanoate.</text>
</comment>
<comment type="catalytic activity">
    <reaction evidence="1">
        <text>(2R,3S)-3-isopropylmalate + NAD(+) = 4-methyl-2-oxopentanoate + CO2 + NADH</text>
        <dbReference type="Rhea" id="RHEA:32271"/>
        <dbReference type="ChEBI" id="CHEBI:16526"/>
        <dbReference type="ChEBI" id="CHEBI:17865"/>
        <dbReference type="ChEBI" id="CHEBI:35121"/>
        <dbReference type="ChEBI" id="CHEBI:57540"/>
        <dbReference type="ChEBI" id="CHEBI:57945"/>
        <dbReference type="EC" id="1.1.1.85"/>
    </reaction>
</comment>
<comment type="cofactor">
    <cofactor evidence="1">
        <name>Mg(2+)</name>
        <dbReference type="ChEBI" id="CHEBI:18420"/>
    </cofactor>
    <cofactor evidence="1">
        <name>Mn(2+)</name>
        <dbReference type="ChEBI" id="CHEBI:29035"/>
    </cofactor>
    <text evidence="1">Binds 1 Mg(2+) or Mn(2+) ion per subunit.</text>
</comment>
<comment type="pathway">
    <text evidence="1">Amino-acid biosynthesis; L-leucine biosynthesis; L-leucine from 3-methyl-2-oxobutanoate: step 3/4.</text>
</comment>
<comment type="subunit">
    <text evidence="1">Homodimer.</text>
</comment>
<comment type="subcellular location">
    <subcellularLocation>
        <location evidence="1">Cytoplasm</location>
    </subcellularLocation>
</comment>
<comment type="similarity">
    <text evidence="1">Belongs to the isocitrate and isopropylmalate dehydrogenases family. LeuB type 1 subfamily.</text>
</comment>
<feature type="chain" id="PRO_0000083737" description="3-isopropylmalate dehydrogenase">
    <location>
        <begin position="1"/>
        <end position="370"/>
    </location>
</feature>
<feature type="binding site" evidence="1">
    <location>
        <begin position="77"/>
        <end position="90"/>
    </location>
    <ligand>
        <name>NAD(+)</name>
        <dbReference type="ChEBI" id="CHEBI:57540"/>
    </ligand>
</feature>
<feature type="binding site" evidence="1">
    <location>
        <position position="97"/>
    </location>
    <ligand>
        <name>substrate</name>
    </ligand>
</feature>
<feature type="binding site" evidence="1">
    <location>
        <position position="107"/>
    </location>
    <ligand>
        <name>substrate</name>
    </ligand>
</feature>
<feature type="binding site" evidence="1">
    <location>
        <position position="135"/>
    </location>
    <ligand>
        <name>substrate</name>
    </ligand>
</feature>
<feature type="binding site" evidence="1">
    <location>
        <position position="226"/>
    </location>
    <ligand>
        <name>Mg(2+)</name>
        <dbReference type="ChEBI" id="CHEBI:18420"/>
    </ligand>
</feature>
<feature type="binding site" evidence="1">
    <location>
        <position position="226"/>
    </location>
    <ligand>
        <name>substrate</name>
    </ligand>
</feature>
<feature type="binding site" evidence="1">
    <location>
        <position position="250"/>
    </location>
    <ligand>
        <name>Mg(2+)</name>
        <dbReference type="ChEBI" id="CHEBI:18420"/>
    </ligand>
</feature>
<feature type="binding site" evidence="1">
    <location>
        <position position="254"/>
    </location>
    <ligand>
        <name>Mg(2+)</name>
        <dbReference type="ChEBI" id="CHEBI:18420"/>
    </ligand>
</feature>
<feature type="binding site" evidence="1">
    <location>
        <begin position="290"/>
        <end position="302"/>
    </location>
    <ligand>
        <name>NAD(+)</name>
        <dbReference type="ChEBI" id="CHEBI:57540"/>
    </ligand>
</feature>
<feature type="site" description="Important for catalysis" evidence="1">
    <location>
        <position position="142"/>
    </location>
</feature>
<feature type="site" description="Important for catalysis" evidence="1">
    <location>
        <position position="193"/>
    </location>
</feature>
<protein>
    <recommendedName>
        <fullName evidence="1">3-isopropylmalate dehydrogenase</fullName>
        <ecNumber evidence="1">1.1.1.85</ecNumber>
    </recommendedName>
    <alternativeName>
        <fullName evidence="1">3-IPM-DH</fullName>
    </alternativeName>
    <alternativeName>
        <fullName evidence="1">Beta-IPM dehydrogenase</fullName>
        <shortName evidence="1">IMDH</shortName>
    </alternativeName>
</protein>